<sequence>MLNRYPLWKNLMVIFIVAIGILYSLPNIYGEDPAVQISGTRGQEANTSVLGQVQDVLKTNNLPTKSIVLENGSILARFTNTDDQLLAKDKIAERLGNNYTTALNLAPATPAWLSMFGANPMKWGLDLRGGVRFLMEVDMNATLVKRQEQLQDSLRGELRKEKIQYTAIKNTEHFGTLITLANVSQRAKAERIIRQLHPTLDITEPDADSINLGLSTAALNEARDLAIEQNLTILRKRVAELGVAEAVIQRQGAERIVIELPGVQDTARAKEILGATATLEFRIVNQNVTADAISRNMLPADSEVKYDRQGHPVALFKRAVLGGEHIINSSSGLDQHSSTPQVSVTLDSEGGEIMSQTTKKYYKKPMATLYVEYKDNGKKDENGKTILEKHEEVINVATIQGRFGSNFQITGVDSIAEAHNLSTLLKSGALIAPIQIVEERTIGPSLGAQNVEQGINASLWGLVAVIAFMLFYYKMFGVIASFALVINIVLLVGLMSILPGATLSMPGIAGIVLTLGMSVDANVLIFERIKEEIRNGRSIQQAINEGYNGAFTSIFDANLTTILTAIILYAVGTGPIQGFAITLSLGVAISMFTAITGTRALVNALYGGKQLKKLLI</sequence>
<feature type="chain" id="PRO_0000095962" description="Protein translocase subunit SecD">
    <location>
        <begin position="1"/>
        <end position="616"/>
    </location>
</feature>
<feature type="transmembrane region" description="Helical" evidence="1">
    <location>
        <begin position="11"/>
        <end position="31"/>
    </location>
</feature>
<feature type="transmembrane region" description="Helical" evidence="1">
    <location>
        <begin position="453"/>
        <end position="473"/>
    </location>
</feature>
<feature type="transmembrane region" description="Helical" evidence="1">
    <location>
        <begin position="475"/>
        <end position="495"/>
    </location>
</feature>
<feature type="transmembrane region" description="Helical" evidence="1">
    <location>
        <begin position="497"/>
        <end position="517"/>
    </location>
</feature>
<feature type="transmembrane region" description="Helical" evidence="1">
    <location>
        <begin position="547"/>
        <end position="569"/>
    </location>
</feature>
<feature type="transmembrane region" description="Helical" evidence="1">
    <location>
        <begin position="585"/>
        <end position="605"/>
    </location>
</feature>
<evidence type="ECO:0000255" key="1">
    <source>
        <dbReference type="HAMAP-Rule" id="MF_01463"/>
    </source>
</evidence>
<gene>
    <name evidence="1" type="primary">secD</name>
    <name type="ordered locus">HI_0240</name>
</gene>
<proteinExistence type="inferred from homology"/>
<protein>
    <recommendedName>
        <fullName evidence="1">Protein translocase subunit SecD</fullName>
    </recommendedName>
</protein>
<dbReference type="EMBL" id="L42023">
    <property type="protein sequence ID" value="AAC21908.1"/>
    <property type="molecule type" value="Genomic_DNA"/>
</dbReference>
<dbReference type="PIR" id="I64056">
    <property type="entry name" value="I64056"/>
</dbReference>
<dbReference type="RefSeq" id="NP_438410.1">
    <property type="nucleotide sequence ID" value="NC_000907.1"/>
</dbReference>
<dbReference type="SMR" id="P44591"/>
<dbReference type="STRING" id="71421.HI_0240"/>
<dbReference type="EnsemblBacteria" id="AAC21908">
    <property type="protein sequence ID" value="AAC21908"/>
    <property type="gene ID" value="HI_0240"/>
</dbReference>
<dbReference type="KEGG" id="hin:HI_0240"/>
<dbReference type="PATRIC" id="fig|71421.8.peg.255"/>
<dbReference type="eggNOG" id="COG0342">
    <property type="taxonomic scope" value="Bacteria"/>
</dbReference>
<dbReference type="HOGENOM" id="CLU_007894_4_3_6"/>
<dbReference type="OrthoDB" id="9805019at2"/>
<dbReference type="PhylomeDB" id="P44591"/>
<dbReference type="BioCyc" id="HINF71421:G1GJ1-255-MONOMER"/>
<dbReference type="Proteomes" id="UP000000579">
    <property type="component" value="Chromosome"/>
</dbReference>
<dbReference type="GO" id="GO:0005886">
    <property type="term" value="C:plasma membrane"/>
    <property type="evidence" value="ECO:0000318"/>
    <property type="project" value="GO_Central"/>
</dbReference>
<dbReference type="GO" id="GO:0015450">
    <property type="term" value="F:protein-transporting ATPase activity"/>
    <property type="evidence" value="ECO:0007669"/>
    <property type="project" value="InterPro"/>
</dbReference>
<dbReference type="GO" id="GO:0065002">
    <property type="term" value="P:intracellular protein transmembrane transport"/>
    <property type="evidence" value="ECO:0007669"/>
    <property type="project" value="UniProtKB-UniRule"/>
</dbReference>
<dbReference type="GO" id="GO:0006605">
    <property type="term" value="P:protein targeting"/>
    <property type="evidence" value="ECO:0007669"/>
    <property type="project" value="UniProtKB-UniRule"/>
</dbReference>
<dbReference type="GO" id="GO:0015031">
    <property type="term" value="P:protein transport"/>
    <property type="evidence" value="ECO:0000318"/>
    <property type="project" value="GO_Central"/>
</dbReference>
<dbReference type="GO" id="GO:0043952">
    <property type="term" value="P:protein transport by the Sec complex"/>
    <property type="evidence" value="ECO:0007669"/>
    <property type="project" value="UniProtKB-UniRule"/>
</dbReference>
<dbReference type="FunFam" id="3.30.70.3400:FF:000003">
    <property type="entry name" value="Preprotein translocase subunit SecD"/>
    <property type="match status" value="1"/>
</dbReference>
<dbReference type="FunFam" id="1.20.1640.10:FF:000004">
    <property type="entry name" value="Protein translocase subunit SecD"/>
    <property type="match status" value="1"/>
</dbReference>
<dbReference type="FunFam" id="3.30.1360.200:FF:000001">
    <property type="entry name" value="Protein translocase subunit SecD"/>
    <property type="match status" value="1"/>
</dbReference>
<dbReference type="Gene3D" id="3.30.1360.200">
    <property type="match status" value="1"/>
</dbReference>
<dbReference type="Gene3D" id="3.30.70.3400">
    <property type="match status" value="2"/>
</dbReference>
<dbReference type="Gene3D" id="1.20.1640.10">
    <property type="entry name" value="Multidrug efflux transporter AcrB transmembrane domain"/>
    <property type="match status" value="1"/>
</dbReference>
<dbReference type="HAMAP" id="MF_01463_B">
    <property type="entry name" value="SecD_B"/>
    <property type="match status" value="1"/>
</dbReference>
<dbReference type="InterPro" id="IPR001036">
    <property type="entry name" value="Acrflvin-R"/>
</dbReference>
<dbReference type="InterPro" id="IPR005791">
    <property type="entry name" value="SecD"/>
</dbReference>
<dbReference type="InterPro" id="IPR027398">
    <property type="entry name" value="SecD-TM"/>
</dbReference>
<dbReference type="InterPro" id="IPR022813">
    <property type="entry name" value="SecD/SecF_arch_bac"/>
</dbReference>
<dbReference type="InterPro" id="IPR022646">
    <property type="entry name" value="SecD/SecF_CS"/>
</dbReference>
<dbReference type="InterPro" id="IPR048631">
    <property type="entry name" value="SecD_1st"/>
</dbReference>
<dbReference type="InterPro" id="IPR048634">
    <property type="entry name" value="SecD_SecF_C"/>
</dbReference>
<dbReference type="InterPro" id="IPR055344">
    <property type="entry name" value="SecD_SecF_C_bact"/>
</dbReference>
<dbReference type="InterPro" id="IPR054384">
    <property type="entry name" value="SecDF_P1_head"/>
</dbReference>
<dbReference type="NCBIfam" id="TIGR00916">
    <property type="entry name" value="2A0604s01"/>
    <property type="match status" value="1"/>
</dbReference>
<dbReference type="NCBIfam" id="TIGR01129">
    <property type="entry name" value="secD"/>
    <property type="match status" value="1"/>
</dbReference>
<dbReference type="PANTHER" id="PTHR30081:SF1">
    <property type="entry name" value="PROTEIN TRANSLOCASE SUBUNIT SECD"/>
    <property type="match status" value="1"/>
</dbReference>
<dbReference type="PANTHER" id="PTHR30081">
    <property type="entry name" value="PROTEIN-EXPORT MEMBRANE PROTEIN SEC"/>
    <property type="match status" value="1"/>
</dbReference>
<dbReference type="Pfam" id="PF07549">
    <property type="entry name" value="Sec_GG"/>
    <property type="match status" value="1"/>
</dbReference>
<dbReference type="Pfam" id="PF13721">
    <property type="entry name" value="SecD-TM1"/>
    <property type="match status" value="1"/>
</dbReference>
<dbReference type="Pfam" id="PF21760">
    <property type="entry name" value="SecD_1st"/>
    <property type="match status" value="1"/>
</dbReference>
<dbReference type="Pfam" id="PF02355">
    <property type="entry name" value="SecD_SecF_C"/>
    <property type="match status" value="1"/>
</dbReference>
<dbReference type="Pfam" id="PF22599">
    <property type="entry name" value="SecDF_P1_head"/>
    <property type="match status" value="1"/>
</dbReference>
<dbReference type="PRINTS" id="PR00702">
    <property type="entry name" value="ACRIFLAVINRP"/>
</dbReference>
<dbReference type="SUPFAM" id="SSF82866">
    <property type="entry name" value="Multidrug efflux transporter AcrB transmembrane domain"/>
    <property type="match status" value="1"/>
</dbReference>
<reference key="1">
    <citation type="journal article" date="1995" name="Science">
        <title>Whole-genome random sequencing and assembly of Haemophilus influenzae Rd.</title>
        <authorList>
            <person name="Fleischmann R.D."/>
            <person name="Adams M.D."/>
            <person name="White O."/>
            <person name="Clayton R.A."/>
            <person name="Kirkness E.F."/>
            <person name="Kerlavage A.R."/>
            <person name="Bult C.J."/>
            <person name="Tomb J.-F."/>
            <person name="Dougherty B.A."/>
            <person name="Merrick J.M."/>
            <person name="McKenney K."/>
            <person name="Sutton G.G."/>
            <person name="FitzHugh W."/>
            <person name="Fields C.A."/>
            <person name="Gocayne J.D."/>
            <person name="Scott J.D."/>
            <person name="Shirley R."/>
            <person name="Liu L.-I."/>
            <person name="Glodek A."/>
            <person name="Kelley J.M."/>
            <person name="Weidman J.F."/>
            <person name="Phillips C.A."/>
            <person name="Spriggs T."/>
            <person name="Hedblom E."/>
            <person name="Cotton M.D."/>
            <person name="Utterback T.R."/>
            <person name="Hanna M.C."/>
            <person name="Nguyen D.T."/>
            <person name="Saudek D.M."/>
            <person name="Brandon R.C."/>
            <person name="Fine L.D."/>
            <person name="Fritchman J.L."/>
            <person name="Fuhrmann J.L."/>
            <person name="Geoghagen N.S.M."/>
            <person name="Gnehm C.L."/>
            <person name="McDonald L.A."/>
            <person name="Small K.V."/>
            <person name="Fraser C.M."/>
            <person name="Smith H.O."/>
            <person name="Venter J.C."/>
        </authorList>
    </citation>
    <scope>NUCLEOTIDE SEQUENCE [LARGE SCALE GENOMIC DNA]</scope>
    <source>
        <strain>ATCC 51907 / DSM 11121 / KW20 / Rd</strain>
    </source>
</reference>
<organism>
    <name type="scientific">Haemophilus influenzae (strain ATCC 51907 / DSM 11121 / KW20 / Rd)</name>
    <dbReference type="NCBI Taxonomy" id="71421"/>
    <lineage>
        <taxon>Bacteria</taxon>
        <taxon>Pseudomonadati</taxon>
        <taxon>Pseudomonadota</taxon>
        <taxon>Gammaproteobacteria</taxon>
        <taxon>Pasteurellales</taxon>
        <taxon>Pasteurellaceae</taxon>
        <taxon>Haemophilus</taxon>
    </lineage>
</organism>
<comment type="function">
    <text evidence="1">Part of the Sec protein translocase complex. Interacts with the SecYEG preprotein conducting channel. SecDF uses the proton motive force (PMF) to complete protein translocation after the ATP-dependent function of SecA.</text>
</comment>
<comment type="subunit">
    <text evidence="1">Forms a complex with SecF. Part of the essential Sec protein translocation apparatus which comprises SecA, SecYEG and auxiliary proteins SecDF-YajC and YidC.</text>
</comment>
<comment type="subcellular location">
    <subcellularLocation>
        <location evidence="1">Cell inner membrane</location>
        <topology evidence="1">Multi-pass membrane protein</topology>
    </subcellularLocation>
</comment>
<comment type="similarity">
    <text evidence="1">Belongs to the SecD/SecF family. SecD subfamily.</text>
</comment>
<name>SECD_HAEIN</name>
<accession>P44591</accession>
<keyword id="KW-0997">Cell inner membrane</keyword>
<keyword id="KW-1003">Cell membrane</keyword>
<keyword id="KW-0472">Membrane</keyword>
<keyword id="KW-0653">Protein transport</keyword>
<keyword id="KW-1185">Reference proteome</keyword>
<keyword id="KW-0811">Translocation</keyword>
<keyword id="KW-0812">Transmembrane</keyword>
<keyword id="KW-1133">Transmembrane helix</keyword>
<keyword id="KW-0813">Transport</keyword>